<sequence length="379" mass="42551">MTNIRKTHPLLKIINSSFVDLPAPSSLSTWWNFGSLLGVCLAVQILTGLFLAMHYTSDTATAFNSVTHICRDVNYGWLIRYLHAIGASMFFICLYLHVGRGLYYGSYTYSETWNVGIILLFAVMATAFMGYVLPWGQMSFWGATVITNLLSAIPYIGTDLVQWIWGGFSVDKATLTRFFAFHFLLPFIVAALVIVHLLFLHETGSNNPTGIPSDSDMIPFHPYYTIKDILGFLIMLTALSGLVLFSPDLLGDPDNYTPANPSITPPHIKPEWYFLFAYAILRSIPNKLGGVLALVMSILILAVIPMLHTSKQRSMMFRPLSQCLFWLLMAVLLTLTWIGGQPVEHPFIIIGQTASMLYFLIILVLMPITSLTENYLLKW</sequence>
<name>CYB_RHIPM</name>
<proteinExistence type="inferred from homology"/>
<comment type="function">
    <text evidence="2">Component of the ubiquinol-cytochrome c reductase complex (complex III or cytochrome b-c1 complex) that is part of the mitochondrial respiratory chain. The b-c1 complex mediates electron transfer from ubiquinol to cytochrome c. Contributes to the generation of a proton gradient across the mitochondrial membrane that is then used for ATP synthesis.</text>
</comment>
<comment type="cofactor">
    <cofactor evidence="2">
        <name>heme b</name>
        <dbReference type="ChEBI" id="CHEBI:60344"/>
    </cofactor>
    <text evidence="2">Binds 2 heme b groups non-covalently.</text>
</comment>
<comment type="subunit">
    <text evidence="2">The cytochrome bc1 complex contains 11 subunits: 3 respiratory subunits (MT-CYB, CYC1 and UQCRFS1), 2 core proteins (UQCRC1 and UQCRC2) and 6 low-molecular weight proteins (UQCRH/QCR6, UQCRB/QCR7, UQCRQ/QCR8, UQCR10/QCR9, UQCR11/QCR10 and a cleavage product of UQCRFS1). This cytochrome bc1 complex then forms a dimer.</text>
</comment>
<comment type="subcellular location">
    <subcellularLocation>
        <location evidence="2">Mitochondrion inner membrane</location>
        <topology evidence="2">Multi-pass membrane protein</topology>
    </subcellularLocation>
</comment>
<comment type="miscellaneous">
    <text evidence="1">Heme 1 (or BL or b562) is low-potential and absorbs at about 562 nm, and heme 2 (or BH or b566) is high-potential and absorbs at about 566 nm.</text>
</comment>
<comment type="similarity">
    <text evidence="3 4">Belongs to the cytochrome b family.</text>
</comment>
<comment type="caution">
    <text evidence="2">The full-length protein contains only eight transmembrane helices, not nine as predicted by bioinformatics tools.</text>
</comment>
<reference key="1">
    <citation type="journal article" date="1999" name="J. Mammal.">
        <title>Systematics of the genera Carollia and Rhinophylla based on the cytochrome b gene.</title>
        <authorList>
            <person name="Wright A.J."/>
            <person name="Van Den Bussche R.A."/>
            <person name="Lim B.K."/>
            <person name="Engstrom M.D."/>
            <person name="Baker R.J."/>
        </authorList>
    </citation>
    <scope>NUCLEOTIDE SEQUENCE [GENOMIC DNA]</scope>
    <source>
        <strain>Isolate TK 46001</strain>
    </source>
</reference>
<accession>Q9GAM9</accession>
<gene>
    <name type="primary">MT-CYB</name>
    <name type="synonym">COB</name>
    <name type="synonym">CYTB</name>
    <name type="synonym">MTCYB</name>
</gene>
<keyword id="KW-0249">Electron transport</keyword>
<keyword id="KW-0349">Heme</keyword>
<keyword id="KW-0408">Iron</keyword>
<keyword id="KW-0472">Membrane</keyword>
<keyword id="KW-0479">Metal-binding</keyword>
<keyword id="KW-0496">Mitochondrion</keyword>
<keyword id="KW-0999">Mitochondrion inner membrane</keyword>
<keyword id="KW-0679">Respiratory chain</keyword>
<keyword id="KW-0812">Transmembrane</keyword>
<keyword id="KW-1133">Transmembrane helix</keyword>
<keyword id="KW-0813">Transport</keyword>
<keyword id="KW-0830">Ubiquinone</keyword>
<feature type="chain" id="PRO_0000061501" description="Cytochrome b">
    <location>
        <begin position="1"/>
        <end position="379"/>
    </location>
</feature>
<feature type="transmembrane region" description="Helical" evidence="2">
    <location>
        <begin position="33"/>
        <end position="53"/>
    </location>
</feature>
<feature type="transmembrane region" description="Helical" evidence="2">
    <location>
        <begin position="77"/>
        <end position="98"/>
    </location>
</feature>
<feature type="transmembrane region" description="Helical" evidence="2">
    <location>
        <begin position="113"/>
        <end position="133"/>
    </location>
</feature>
<feature type="transmembrane region" description="Helical" evidence="2">
    <location>
        <begin position="178"/>
        <end position="198"/>
    </location>
</feature>
<feature type="transmembrane region" description="Helical" evidence="2">
    <location>
        <begin position="226"/>
        <end position="246"/>
    </location>
</feature>
<feature type="transmembrane region" description="Helical" evidence="2">
    <location>
        <begin position="288"/>
        <end position="308"/>
    </location>
</feature>
<feature type="transmembrane region" description="Helical" evidence="2">
    <location>
        <begin position="320"/>
        <end position="340"/>
    </location>
</feature>
<feature type="transmembrane region" description="Helical" evidence="2">
    <location>
        <begin position="347"/>
        <end position="367"/>
    </location>
</feature>
<feature type="binding site" description="axial binding residue" evidence="2">
    <location>
        <position position="83"/>
    </location>
    <ligand>
        <name>heme b</name>
        <dbReference type="ChEBI" id="CHEBI:60344"/>
        <label>b562</label>
    </ligand>
    <ligandPart>
        <name>Fe</name>
        <dbReference type="ChEBI" id="CHEBI:18248"/>
    </ligandPart>
</feature>
<feature type="binding site" description="axial binding residue" evidence="2">
    <location>
        <position position="97"/>
    </location>
    <ligand>
        <name>heme b</name>
        <dbReference type="ChEBI" id="CHEBI:60344"/>
        <label>b566</label>
    </ligand>
    <ligandPart>
        <name>Fe</name>
        <dbReference type="ChEBI" id="CHEBI:18248"/>
    </ligandPart>
</feature>
<feature type="binding site" description="axial binding residue" evidence="2">
    <location>
        <position position="182"/>
    </location>
    <ligand>
        <name>heme b</name>
        <dbReference type="ChEBI" id="CHEBI:60344"/>
        <label>b562</label>
    </ligand>
    <ligandPart>
        <name>Fe</name>
        <dbReference type="ChEBI" id="CHEBI:18248"/>
    </ligandPart>
</feature>
<feature type="binding site" description="axial binding residue" evidence="2">
    <location>
        <position position="196"/>
    </location>
    <ligand>
        <name>heme b</name>
        <dbReference type="ChEBI" id="CHEBI:60344"/>
        <label>b566</label>
    </ligand>
    <ligandPart>
        <name>Fe</name>
        <dbReference type="ChEBI" id="CHEBI:18248"/>
    </ligandPart>
</feature>
<feature type="binding site" evidence="2">
    <location>
        <position position="201"/>
    </location>
    <ligand>
        <name>a ubiquinone</name>
        <dbReference type="ChEBI" id="CHEBI:16389"/>
    </ligand>
</feature>
<protein>
    <recommendedName>
        <fullName>Cytochrome b</fullName>
    </recommendedName>
    <alternativeName>
        <fullName>Complex III subunit 3</fullName>
    </alternativeName>
    <alternativeName>
        <fullName>Complex III subunit III</fullName>
    </alternativeName>
    <alternativeName>
        <fullName>Cytochrome b-c1 complex subunit 3</fullName>
    </alternativeName>
    <alternativeName>
        <fullName>Ubiquinol-cytochrome-c reductase complex cytochrome b subunit</fullName>
    </alternativeName>
</protein>
<organism>
    <name type="scientific">Rhinophylla pumilio</name>
    <name type="common">Dwarf little fruit bat</name>
    <dbReference type="NCBI Taxonomy" id="138707"/>
    <lineage>
        <taxon>Eukaryota</taxon>
        <taxon>Metazoa</taxon>
        <taxon>Chordata</taxon>
        <taxon>Craniata</taxon>
        <taxon>Vertebrata</taxon>
        <taxon>Euteleostomi</taxon>
        <taxon>Mammalia</taxon>
        <taxon>Eutheria</taxon>
        <taxon>Laurasiatheria</taxon>
        <taxon>Chiroptera</taxon>
        <taxon>Yangochiroptera</taxon>
        <taxon>Phyllostomidae</taxon>
        <taxon>Carolliinae</taxon>
        <taxon>Rhinophylla</taxon>
    </lineage>
</organism>
<geneLocation type="mitochondrion"/>
<dbReference type="EMBL" id="AF187030">
    <property type="protein sequence ID" value="AAG25911.1"/>
    <property type="molecule type" value="Genomic_DNA"/>
</dbReference>
<dbReference type="SMR" id="Q9GAM9"/>
<dbReference type="GO" id="GO:0005743">
    <property type="term" value="C:mitochondrial inner membrane"/>
    <property type="evidence" value="ECO:0007669"/>
    <property type="project" value="UniProtKB-SubCell"/>
</dbReference>
<dbReference type="GO" id="GO:0045275">
    <property type="term" value="C:respiratory chain complex III"/>
    <property type="evidence" value="ECO:0007669"/>
    <property type="project" value="InterPro"/>
</dbReference>
<dbReference type="GO" id="GO:0046872">
    <property type="term" value="F:metal ion binding"/>
    <property type="evidence" value="ECO:0007669"/>
    <property type="project" value="UniProtKB-KW"/>
</dbReference>
<dbReference type="GO" id="GO:0008121">
    <property type="term" value="F:ubiquinol-cytochrome-c reductase activity"/>
    <property type="evidence" value="ECO:0007669"/>
    <property type="project" value="InterPro"/>
</dbReference>
<dbReference type="GO" id="GO:0006122">
    <property type="term" value="P:mitochondrial electron transport, ubiquinol to cytochrome c"/>
    <property type="evidence" value="ECO:0007669"/>
    <property type="project" value="TreeGrafter"/>
</dbReference>
<dbReference type="CDD" id="cd00290">
    <property type="entry name" value="cytochrome_b_C"/>
    <property type="match status" value="1"/>
</dbReference>
<dbReference type="CDD" id="cd00284">
    <property type="entry name" value="Cytochrome_b_N"/>
    <property type="match status" value="1"/>
</dbReference>
<dbReference type="FunFam" id="1.20.810.10:FF:000002">
    <property type="entry name" value="Cytochrome b"/>
    <property type="match status" value="1"/>
</dbReference>
<dbReference type="Gene3D" id="1.20.810.10">
    <property type="entry name" value="Cytochrome Bc1 Complex, Chain C"/>
    <property type="match status" value="1"/>
</dbReference>
<dbReference type="InterPro" id="IPR005798">
    <property type="entry name" value="Cyt_b/b6_C"/>
</dbReference>
<dbReference type="InterPro" id="IPR036150">
    <property type="entry name" value="Cyt_b/b6_C_sf"/>
</dbReference>
<dbReference type="InterPro" id="IPR005797">
    <property type="entry name" value="Cyt_b/b6_N"/>
</dbReference>
<dbReference type="InterPro" id="IPR027387">
    <property type="entry name" value="Cytb/b6-like_sf"/>
</dbReference>
<dbReference type="InterPro" id="IPR030689">
    <property type="entry name" value="Cytochrome_b"/>
</dbReference>
<dbReference type="InterPro" id="IPR048260">
    <property type="entry name" value="Cytochrome_b_C_euk/bac"/>
</dbReference>
<dbReference type="InterPro" id="IPR048259">
    <property type="entry name" value="Cytochrome_b_N_euk/bac"/>
</dbReference>
<dbReference type="InterPro" id="IPR016174">
    <property type="entry name" value="Di-haem_cyt_TM"/>
</dbReference>
<dbReference type="PANTHER" id="PTHR19271">
    <property type="entry name" value="CYTOCHROME B"/>
    <property type="match status" value="1"/>
</dbReference>
<dbReference type="PANTHER" id="PTHR19271:SF16">
    <property type="entry name" value="CYTOCHROME B"/>
    <property type="match status" value="1"/>
</dbReference>
<dbReference type="Pfam" id="PF00032">
    <property type="entry name" value="Cytochrom_B_C"/>
    <property type="match status" value="1"/>
</dbReference>
<dbReference type="Pfam" id="PF00033">
    <property type="entry name" value="Cytochrome_B"/>
    <property type="match status" value="1"/>
</dbReference>
<dbReference type="PIRSF" id="PIRSF038885">
    <property type="entry name" value="COB"/>
    <property type="match status" value="1"/>
</dbReference>
<dbReference type="SUPFAM" id="SSF81648">
    <property type="entry name" value="a domain/subunit of cytochrome bc1 complex (Ubiquinol-cytochrome c reductase)"/>
    <property type="match status" value="1"/>
</dbReference>
<dbReference type="SUPFAM" id="SSF81342">
    <property type="entry name" value="Transmembrane di-heme cytochromes"/>
    <property type="match status" value="1"/>
</dbReference>
<dbReference type="PROSITE" id="PS51003">
    <property type="entry name" value="CYTB_CTER"/>
    <property type="match status" value="1"/>
</dbReference>
<dbReference type="PROSITE" id="PS51002">
    <property type="entry name" value="CYTB_NTER"/>
    <property type="match status" value="1"/>
</dbReference>
<evidence type="ECO:0000250" key="1"/>
<evidence type="ECO:0000250" key="2">
    <source>
        <dbReference type="UniProtKB" id="P00157"/>
    </source>
</evidence>
<evidence type="ECO:0000255" key="3">
    <source>
        <dbReference type="PROSITE-ProRule" id="PRU00967"/>
    </source>
</evidence>
<evidence type="ECO:0000255" key="4">
    <source>
        <dbReference type="PROSITE-ProRule" id="PRU00968"/>
    </source>
</evidence>